<accession>O57166</accession>
<organismHost>
    <name type="scientific">Homo sapiens</name>
    <name type="common">Human</name>
    <dbReference type="NCBI Taxonomy" id="9606"/>
</organismHost>
<protein>
    <recommendedName>
        <fullName>Pro-vaccinia growth factor</fullName>
        <shortName>Pro-VGF</shortName>
    </recommendedName>
    <component>
        <recommendedName>
            <fullName>Vaccinia growth factor</fullName>
            <shortName>VGF</shortName>
        </recommendedName>
        <alternativeName>
            <fullName>Secreted epidermal growth factor-like</fullName>
        </alternativeName>
    </component>
</protein>
<gene>
    <name type="primary">OPG019</name>
    <name type="ordered locus">MVA005R</name>
    <name type="ordered locus">ACAM3000_MVA_005</name>
</gene>
<name>VGF_VACCA</name>
<evidence type="ECO:0000250" key="1"/>
<evidence type="ECO:0000250" key="2">
    <source>
        <dbReference type="UniProtKB" id="P01136"/>
    </source>
</evidence>
<evidence type="ECO:0000255" key="3"/>
<evidence type="ECO:0000255" key="4">
    <source>
        <dbReference type="PROSITE-ProRule" id="PRU00076"/>
    </source>
</evidence>
<evidence type="ECO:0000305" key="5"/>
<keyword id="KW-1015">Disulfide bond</keyword>
<keyword id="KW-0244">Early protein</keyword>
<keyword id="KW-0245">EGF-like domain</keyword>
<keyword id="KW-0325">Glycoprotein</keyword>
<keyword id="KW-0339">Growth factor</keyword>
<keyword id="KW-1043">Host membrane</keyword>
<keyword id="KW-0945">Host-virus interaction</keyword>
<keyword id="KW-0472">Membrane</keyword>
<keyword id="KW-0964">Secreted</keyword>
<keyword id="KW-0732">Signal</keyword>
<keyword id="KW-0812">Transmembrane</keyword>
<keyword id="KW-1133">Transmembrane helix</keyword>
<feature type="signal peptide" evidence="3">
    <location>
        <begin position="1"/>
        <end position="18"/>
    </location>
</feature>
<feature type="chain" id="PRO_0000007595" description="Pro-vaccinia growth factor">
    <location>
        <begin position="19"/>
        <end position="140"/>
    </location>
</feature>
<feature type="chain" id="PRO_0000412914" description="Vaccinia growth factor" evidence="3">
    <location>
        <begin position="19"/>
        <end position="96"/>
    </location>
</feature>
<feature type="topological domain" description="Extracellular" evidence="3">
    <location>
        <begin position="19"/>
        <end position="100"/>
    </location>
</feature>
<feature type="transmembrane region" description="Helical" evidence="3">
    <location>
        <begin position="101"/>
        <end position="121"/>
    </location>
</feature>
<feature type="topological domain" description="Cytoplasmic" evidence="3">
    <location>
        <begin position="122"/>
        <end position="140"/>
    </location>
</feature>
<feature type="domain" description="EGF-like" evidence="4">
    <location>
        <begin position="41"/>
        <end position="81"/>
    </location>
</feature>
<feature type="site" description="Cleavage (By host protease)" evidence="3">
    <location>
        <begin position="96"/>
        <end position="97"/>
    </location>
</feature>
<feature type="glycosylation site" description="N-linked (GlcNAc...) asparagine; by host" evidence="3">
    <location>
        <position position="34"/>
    </location>
</feature>
<feature type="glycosylation site" description="N-linked (GlcNAc...) asparagine; by host" evidence="3">
    <location>
        <position position="95"/>
    </location>
</feature>
<feature type="disulfide bond" evidence="4">
    <location>
        <begin position="45"/>
        <end position="58"/>
    </location>
</feature>
<feature type="disulfide bond" evidence="4">
    <location>
        <begin position="53"/>
        <end position="69"/>
    </location>
</feature>
<feature type="disulfide bond" evidence="4">
    <location>
        <begin position="71"/>
        <end position="80"/>
    </location>
</feature>
<reference key="1">
    <citation type="journal article" date="1998" name="Virology">
        <title>The complete genomic sequence of the modified vaccinia Ankara strain: comparison with other orthopoxviruses.</title>
        <authorList>
            <person name="Antoine G."/>
            <person name="Scheiflinger F."/>
            <person name="Dorner F."/>
            <person name="Falkner F.G."/>
        </authorList>
    </citation>
    <scope>NUCLEOTIDE SEQUENCE [LARGE SCALE GENOMIC DNA]</scope>
</reference>
<reference key="2">
    <citation type="submission" date="2004-04" db="EMBL/GenBank/DDBJ databases">
        <authorList>
            <person name="Esposito J.J."/>
            <person name="Frace M."/>
            <person name="Sammons S.A."/>
            <person name="Olsen-Rasmussen M.S."/>
            <person name="Osborne J."/>
            <person name="Khristova M."/>
            <person name="Wohlhueter R.M."/>
        </authorList>
    </citation>
    <scope>NUCLEOTIDE SEQUENCE [LARGE SCALE GENOMIC DNA]</scope>
    <source>
        <strain>Isolate Acambis 3000</strain>
    </source>
</reference>
<comment type="function">
    <text evidence="1">Stimulates cellular proliferation (hyperplasia)and mobility around infected cells to promote rapid and efficient spread of infection. This effect is beneficial for virus replication in vivo, because poxviruses replicate possibly better in proliferating cells than in quiescent cells. Acts by binding host EGFR, inducing its dimerization, autophosphorylation and leading to activation of several cellular pathways regulating cell proliferation or cell survival. The activation by host EGFR of mitogen activated protein kinases (MAPK) and extracellular-signal regulated kinases (ERK) are essential for the positive effect of vaccinia growth factor on poxvirus virulence in vivo (By similarity).</text>
</comment>
<comment type="subunit">
    <molecule>Vaccinia growth factor</molecule>
    <text evidence="2">Interacts with host EGFR.</text>
</comment>
<comment type="subcellular location">
    <molecule>Pro-vaccinia growth factor</molecule>
    <subcellularLocation>
        <location evidence="2">Host membrane</location>
        <topology evidence="2">Single-pass type I membrane protein</topology>
    </subcellularLocation>
</comment>
<comment type="subcellular location">
    <molecule>Vaccinia growth factor</molecule>
    <subcellularLocation>
        <location evidence="2">Secreted</location>
    </subcellularLocation>
</comment>
<comment type="induction">
    <text evidence="2">Expressed in the early phase of the viral replicative cycle.</text>
</comment>
<comment type="similarity">
    <text evidence="5">Belongs to the orthopoxvirus OPG019 family.</text>
</comment>
<sequence>MLINYLMLLFAAMIIRSFADSGNAIETTSPEITNATTDIPAIRLCGPEGDGYCLHGDCIHARDIDGMYCRCSHGYTGIRCQHVVLVDYQRSEKPNTTTSYIPSPGIMLVLVGIIIITCCLLSVYRFTRRTKLPIQDMVVP</sequence>
<dbReference type="EMBL" id="U94848">
    <property type="protein sequence ID" value="AAB96482.1"/>
    <property type="molecule type" value="Genomic_DNA"/>
</dbReference>
<dbReference type="EMBL" id="AY603355">
    <property type="protein sequence ID" value="AAT10402.1"/>
    <property type="molecule type" value="Genomic_DNA"/>
</dbReference>
<dbReference type="PIR" id="T30766">
    <property type="entry name" value="T30766"/>
</dbReference>
<dbReference type="SMR" id="O57166"/>
<dbReference type="GlyCosmos" id="O57166">
    <property type="glycosylation" value="2 sites, No reported glycans"/>
</dbReference>
<dbReference type="Proteomes" id="UP000159908">
    <property type="component" value="Segment"/>
</dbReference>
<dbReference type="Proteomes" id="UP000172909">
    <property type="component" value="Segment"/>
</dbReference>
<dbReference type="GO" id="GO:0005615">
    <property type="term" value="C:extracellular space"/>
    <property type="evidence" value="ECO:0007669"/>
    <property type="project" value="TreeGrafter"/>
</dbReference>
<dbReference type="GO" id="GO:0033644">
    <property type="term" value="C:host cell membrane"/>
    <property type="evidence" value="ECO:0007669"/>
    <property type="project" value="UniProtKB-SubCell"/>
</dbReference>
<dbReference type="GO" id="GO:0016020">
    <property type="term" value="C:membrane"/>
    <property type="evidence" value="ECO:0007669"/>
    <property type="project" value="UniProtKB-KW"/>
</dbReference>
<dbReference type="GO" id="GO:0005154">
    <property type="term" value="F:epidermal growth factor receptor binding"/>
    <property type="evidence" value="ECO:0007669"/>
    <property type="project" value="InterPro"/>
</dbReference>
<dbReference type="GO" id="GO:0008083">
    <property type="term" value="F:growth factor activity"/>
    <property type="evidence" value="ECO:0007669"/>
    <property type="project" value="UniProtKB-KW"/>
</dbReference>
<dbReference type="GO" id="GO:0007173">
    <property type="term" value="P:epidermal growth factor receptor signaling pathway"/>
    <property type="evidence" value="ECO:0007669"/>
    <property type="project" value="TreeGrafter"/>
</dbReference>
<dbReference type="GO" id="GO:0008284">
    <property type="term" value="P:positive regulation of cell population proliferation"/>
    <property type="evidence" value="ECO:0007669"/>
    <property type="project" value="TreeGrafter"/>
</dbReference>
<dbReference type="GO" id="GO:0045840">
    <property type="term" value="P:positive regulation of mitotic nuclear division"/>
    <property type="evidence" value="ECO:0007669"/>
    <property type="project" value="TreeGrafter"/>
</dbReference>
<dbReference type="Gene3D" id="2.10.25.10">
    <property type="entry name" value="Laminin"/>
    <property type="match status" value="1"/>
</dbReference>
<dbReference type="InterPro" id="IPR000742">
    <property type="entry name" value="EGF-like_dom"/>
</dbReference>
<dbReference type="InterPro" id="IPR011170">
    <property type="entry name" value="GF_C11R"/>
</dbReference>
<dbReference type="PANTHER" id="PTHR10740:SF11">
    <property type="entry name" value="PROEPIREGULIN"/>
    <property type="match status" value="1"/>
</dbReference>
<dbReference type="PANTHER" id="PTHR10740">
    <property type="entry name" value="TRANSFORMING GROWTH FACTOR ALPHA"/>
    <property type="match status" value="1"/>
</dbReference>
<dbReference type="PIRSF" id="PIRSF001779">
    <property type="entry name" value="GF_C11R"/>
    <property type="match status" value="1"/>
</dbReference>
<dbReference type="PRINTS" id="PR00009">
    <property type="entry name" value="EGFTGF"/>
</dbReference>
<dbReference type="SUPFAM" id="SSF57196">
    <property type="entry name" value="EGF/Laminin"/>
    <property type="match status" value="1"/>
</dbReference>
<dbReference type="PROSITE" id="PS00022">
    <property type="entry name" value="EGF_1"/>
    <property type="match status" value="1"/>
</dbReference>
<dbReference type="PROSITE" id="PS01186">
    <property type="entry name" value="EGF_2"/>
    <property type="match status" value="1"/>
</dbReference>
<dbReference type="PROSITE" id="PS50026">
    <property type="entry name" value="EGF_3"/>
    <property type="match status" value="1"/>
</dbReference>
<organism>
    <name type="scientific">Vaccinia virus (strain Ankara)</name>
    <name type="common">VACV</name>
    <dbReference type="NCBI Taxonomy" id="126794"/>
    <lineage>
        <taxon>Viruses</taxon>
        <taxon>Varidnaviria</taxon>
        <taxon>Bamfordvirae</taxon>
        <taxon>Nucleocytoviricota</taxon>
        <taxon>Pokkesviricetes</taxon>
        <taxon>Chitovirales</taxon>
        <taxon>Poxviridae</taxon>
        <taxon>Chordopoxvirinae</taxon>
        <taxon>Orthopoxvirus</taxon>
        <taxon>Vaccinia virus</taxon>
    </lineage>
</organism>
<proteinExistence type="inferred from homology"/>